<comment type="catalytic activity">
    <reaction evidence="1">
        <text>alpha-D-xylose = alpha-D-xylulofuranose</text>
        <dbReference type="Rhea" id="RHEA:22816"/>
        <dbReference type="ChEBI" id="CHEBI:28518"/>
        <dbReference type="ChEBI" id="CHEBI:188998"/>
        <dbReference type="EC" id="5.3.1.5"/>
    </reaction>
</comment>
<comment type="cofactor">
    <cofactor evidence="1">
        <name>Mg(2+)</name>
        <dbReference type="ChEBI" id="CHEBI:18420"/>
    </cofactor>
    <text evidence="1">Binds 2 magnesium ions per subunit.</text>
</comment>
<comment type="subunit">
    <text evidence="1">Homotetramer.</text>
</comment>
<comment type="subcellular location">
    <subcellularLocation>
        <location evidence="1">Cytoplasm</location>
    </subcellularLocation>
</comment>
<comment type="similarity">
    <text evidence="1">Belongs to the xylose isomerase family.</text>
</comment>
<accession>Q57EI4</accession>
<keyword id="KW-0119">Carbohydrate metabolism</keyword>
<keyword id="KW-0963">Cytoplasm</keyword>
<keyword id="KW-0413">Isomerase</keyword>
<keyword id="KW-0460">Magnesium</keyword>
<keyword id="KW-0479">Metal-binding</keyword>
<keyword id="KW-0859">Xylose metabolism</keyword>
<evidence type="ECO:0000255" key="1">
    <source>
        <dbReference type="HAMAP-Rule" id="MF_00455"/>
    </source>
</evidence>
<name>XYLA_BRUAB</name>
<protein>
    <recommendedName>
        <fullName evidence="1">Xylose isomerase</fullName>
        <ecNumber evidence="1">5.3.1.5</ecNumber>
    </recommendedName>
</protein>
<reference key="1">
    <citation type="journal article" date="2005" name="J. Bacteriol.">
        <title>Completion of the genome sequence of Brucella abortus and comparison to the highly similar genomes of Brucella melitensis and Brucella suis.</title>
        <authorList>
            <person name="Halling S.M."/>
            <person name="Peterson-Burch B.D."/>
            <person name="Bricker B.J."/>
            <person name="Zuerner R.L."/>
            <person name="Qing Z."/>
            <person name="Li L.-L."/>
            <person name="Kapur V."/>
            <person name="Alt D.P."/>
            <person name="Olsen S.C."/>
        </authorList>
    </citation>
    <scope>NUCLEOTIDE SEQUENCE [LARGE SCALE GENOMIC DNA]</scope>
    <source>
        <strain>9-941</strain>
    </source>
</reference>
<organism>
    <name type="scientific">Brucella abortus biovar 1 (strain 9-941)</name>
    <dbReference type="NCBI Taxonomy" id="262698"/>
    <lineage>
        <taxon>Bacteria</taxon>
        <taxon>Pseudomonadati</taxon>
        <taxon>Pseudomonadota</taxon>
        <taxon>Alphaproteobacteria</taxon>
        <taxon>Hyphomicrobiales</taxon>
        <taxon>Brucellaceae</taxon>
        <taxon>Brucella/Ochrobactrum group</taxon>
        <taxon>Brucella</taxon>
    </lineage>
</organism>
<proteinExistence type="inferred from homology"/>
<gene>
    <name evidence="1" type="primary">xylA</name>
    <name type="ordered locus">BruAb1_0569</name>
</gene>
<dbReference type="EC" id="5.3.1.5" evidence="1"/>
<dbReference type="EMBL" id="AE017223">
    <property type="protein sequence ID" value="AAX73950.1"/>
    <property type="molecule type" value="Genomic_DNA"/>
</dbReference>
<dbReference type="RefSeq" id="WP_002966715.1">
    <property type="nucleotide sequence ID" value="NC_006932.1"/>
</dbReference>
<dbReference type="SMR" id="Q57EI4"/>
<dbReference type="EnsemblBacteria" id="AAX73950">
    <property type="protein sequence ID" value="AAX73950"/>
    <property type="gene ID" value="BruAb1_0569"/>
</dbReference>
<dbReference type="GeneID" id="97534105"/>
<dbReference type="KEGG" id="bmb:BruAb1_0569"/>
<dbReference type="HOGENOM" id="CLU_037261_1_0_5"/>
<dbReference type="Proteomes" id="UP000000540">
    <property type="component" value="Chromosome I"/>
</dbReference>
<dbReference type="GO" id="GO:0005737">
    <property type="term" value="C:cytoplasm"/>
    <property type="evidence" value="ECO:0007669"/>
    <property type="project" value="UniProtKB-SubCell"/>
</dbReference>
<dbReference type="GO" id="GO:0000287">
    <property type="term" value="F:magnesium ion binding"/>
    <property type="evidence" value="ECO:0007669"/>
    <property type="project" value="UniProtKB-UniRule"/>
</dbReference>
<dbReference type="GO" id="GO:0009045">
    <property type="term" value="F:xylose isomerase activity"/>
    <property type="evidence" value="ECO:0007669"/>
    <property type="project" value="UniProtKB-UniRule"/>
</dbReference>
<dbReference type="GO" id="GO:0042732">
    <property type="term" value="P:D-xylose metabolic process"/>
    <property type="evidence" value="ECO:0007669"/>
    <property type="project" value="UniProtKB-UniRule"/>
</dbReference>
<dbReference type="FunFam" id="3.20.20.150:FF:000002">
    <property type="entry name" value="Xylose isomerase"/>
    <property type="match status" value="1"/>
</dbReference>
<dbReference type="Gene3D" id="3.20.20.150">
    <property type="entry name" value="Divalent-metal-dependent TIM barrel enzymes"/>
    <property type="match status" value="1"/>
</dbReference>
<dbReference type="HAMAP" id="MF_00455">
    <property type="entry name" value="Xylose_isom_A"/>
    <property type="match status" value="1"/>
</dbReference>
<dbReference type="InterPro" id="IPR036237">
    <property type="entry name" value="Xyl_isomerase-like_sf"/>
</dbReference>
<dbReference type="InterPro" id="IPR013452">
    <property type="entry name" value="Xylose_isom_bac"/>
</dbReference>
<dbReference type="InterPro" id="IPR001998">
    <property type="entry name" value="Xylose_isomerase"/>
</dbReference>
<dbReference type="NCBIfam" id="NF003998">
    <property type="entry name" value="PRK05474.1"/>
    <property type="match status" value="1"/>
</dbReference>
<dbReference type="NCBIfam" id="TIGR02630">
    <property type="entry name" value="xylose_isom_A"/>
    <property type="match status" value="1"/>
</dbReference>
<dbReference type="PANTHER" id="PTHR48408">
    <property type="match status" value="1"/>
</dbReference>
<dbReference type="PANTHER" id="PTHR48408:SF1">
    <property type="entry name" value="XYLOSE ISOMERASE"/>
    <property type="match status" value="1"/>
</dbReference>
<dbReference type="PRINTS" id="PR00688">
    <property type="entry name" value="XYLOSISMRASE"/>
</dbReference>
<dbReference type="SUPFAM" id="SSF51658">
    <property type="entry name" value="Xylose isomerase-like"/>
    <property type="match status" value="1"/>
</dbReference>
<dbReference type="PROSITE" id="PS51415">
    <property type="entry name" value="XYLOSE_ISOMERASE"/>
    <property type="match status" value="1"/>
</dbReference>
<sequence>MSTGFFGDIQKVRYEGPESDNPLAFRHYNADEIVLGKRMEDHLRFAVAYWHSFAWEGGDPFGGRTFDRPWFSNEIDAAKLKADVAFEFFSLLGAPYYCFHDADVRPEGRNFAENTRYLNEIVDIFEKKQAETGMKLLWGTANLFSNRRYMAGAATNPDPDVFAFAAATVKTCIDATKRLGGENYVLWGGREGYETLLNTDLSRELDHMGRFLSLVVEYKHKIGFKGTILIEPKPQEPTKHQYDYDVATVYGFLKRYGLENEVKVNIEQGHAILAGHSFEHELALARTLGIFGSIDMNRNDYQSGWDTDQFPNNVPEMALAYYQVLLAGGFTTGGTNFDAKLRRQSLDPQDLLIGHIGGMDCCARGLKAAARMLEDGALSKPLDERYAGWNGEFGKRLLSGLSLDQIAGEVEAKDINPQPKSGRQEYLENIVNRYV</sequence>
<feature type="chain" id="PRO_0000236958" description="Xylose isomerase">
    <location>
        <begin position="1"/>
        <end position="435"/>
    </location>
</feature>
<feature type="active site" evidence="1">
    <location>
        <position position="100"/>
    </location>
</feature>
<feature type="active site" evidence="1">
    <location>
        <position position="103"/>
    </location>
</feature>
<feature type="binding site" evidence="1">
    <location>
        <position position="231"/>
    </location>
    <ligand>
        <name>Mg(2+)</name>
        <dbReference type="ChEBI" id="CHEBI:18420"/>
        <label>1</label>
    </ligand>
</feature>
<feature type="binding site" evidence="1">
    <location>
        <position position="267"/>
    </location>
    <ligand>
        <name>Mg(2+)</name>
        <dbReference type="ChEBI" id="CHEBI:18420"/>
        <label>1</label>
    </ligand>
</feature>
<feature type="binding site" evidence="1">
    <location>
        <position position="267"/>
    </location>
    <ligand>
        <name>Mg(2+)</name>
        <dbReference type="ChEBI" id="CHEBI:18420"/>
        <label>2</label>
    </ligand>
</feature>
<feature type="binding site" evidence="1">
    <location>
        <position position="270"/>
    </location>
    <ligand>
        <name>Mg(2+)</name>
        <dbReference type="ChEBI" id="CHEBI:18420"/>
        <label>2</label>
    </ligand>
</feature>
<feature type="binding site" evidence="1">
    <location>
        <position position="295"/>
    </location>
    <ligand>
        <name>Mg(2+)</name>
        <dbReference type="ChEBI" id="CHEBI:18420"/>
        <label>1</label>
    </ligand>
</feature>
<feature type="binding site" evidence="1">
    <location>
        <position position="306"/>
    </location>
    <ligand>
        <name>Mg(2+)</name>
        <dbReference type="ChEBI" id="CHEBI:18420"/>
        <label>2</label>
    </ligand>
</feature>
<feature type="binding site" evidence="1">
    <location>
        <position position="308"/>
    </location>
    <ligand>
        <name>Mg(2+)</name>
        <dbReference type="ChEBI" id="CHEBI:18420"/>
        <label>2</label>
    </ligand>
</feature>
<feature type="binding site" evidence="1">
    <location>
        <position position="338"/>
    </location>
    <ligand>
        <name>Mg(2+)</name>
        <dbReference type="ChEBI" id="CHEBI:18420"/>
        <label>1</label>
    </ligand>
</feature>